<proteinExistence type="inferred from homology"/>
<comment type="function">
    <text evidence="1">Regulator of the exon junction complex (EJC), a multiprotein complex that associates immediately upstream of the exon-exon junction on mRNAs and serves as a positional landmarks for the intron exon structure of genes and directs post-transcriptional processes in the cytoplasm such as mRNA export, nonsense-mediated mRNA decay (NMD) or translation.</text>
</comment>
<comment type="subunit">
    <text evidence="1">Interacts (via N-terminus) with mago and tsu/Y14; the interaction is direct.</text>
</comment>
<comment type="subcellular location">
    <subcellularLocation>
        <location evidence="1">Cytoplasm</location>
    </subcellularLocation>
    <subcellularLocation>
        <location evidence="1">Nucleus</location>
    </subcellularLocation>
    <text evidence="1">Shuttles between the nucleus and the cytoplasm. Nuclear export is mediated by emb/Crm1 (By similarity).</text>
</comment>
<comment type="similarity">
    <text evidence="5">Belongs to the pym family.</text>
</comment>
<keyword id="KW-0175">Coiled coil</keyword>
<keyword id="KW-0963">Cytoplasm</keyword>
<keyword id="KW-0539">Nucleus</keyword>
<keyword id="KW-1185">Reference proteome</keyword>
<accession>Q7Q6B5</accession>
<name>PYM_ANOGA</name>
<feature type="chain" id="PRO_0000378160" description="Partner of Y14 and mago">
    <location>
        <begin position="1"/>
        <end position="233"/>
    </location>
</feature>
<feature type="region of interest" description="Disordered" evidence="4">
    <location>
        <begin position="1"/>
        <end position="153"/>
    </location>
</feature>
<feature type="coiled-coil region" evidence="3">
    <location>
        <begin position="62"/>
        <end position="97"/>
    </location>
</feature>
<feature type="coiled-coil region" evidence="3">
    <location>
        <begin position="167"/>
        <end position="199"/>
    </location>
</feature>
<feature type="compositionally biased region" description="Basic and acidic residues" evidence="4">
    <location>
        <begin position="65"/>
        <end position="90"/>
    </location>
</feature>
<feature type="compositionally biased region" description="Low complexity" evidence="4">
    <location>
        <begin position="122"/>
        <end position="142"/>
    </location>
</feature>
<sequence length="233" mass="25688">MTTYSTDSQGKFIPATQRPDGTWRKPRRVRDGYVPQEEVPLYESKGKQFAQKPALPPGLSPEVVQKAKEKRERERLRQAREEQQRKEQQNKKQQAGALPPGVLAVDGGAVGGNNDKQKPGAKQPQQHTKSSQQKSTTAAAAAVSNNSDSTVDELASALASGAQLAGADAQQLEVAKKLRKLRKKIREIEAIETKLRSTDGPKLDKDQLEKVKRKPDILQEIEELEVQYSAGAM</sequence>
<organism>
    <name type="scientific">Anopheles gambiae</name>
    <name type="common">African malaria mosquito</name>
    <dbReference type="NCBI Taxonomy" id="7165"/>
    <lineage>
        <taxon>Eukaryota</taxon>
        <taxon>Metazoa</taxon>
        <taxon>Ecdysozoa</taxon>
        <taxon>Arthropoda</taxon>
        <taxon>Hexapoda</taxon>
        <taxon>Insecta</taxon>
        <taxon>Pterygota</taxon>
        <taxon>Neoptera</taxon>
        <taxon>Endopterygota</taxon>
        <taxon>Diptera</taxon>
        <taxon>Nematocera</taxon>
        <taxon>Culicoidea</taxon>
        <taxon>Culicidae</taxon>
        <taxon>Anophelinae</taxon>
        <taxon>Anopheles</taxon>
    </lineage>
</organism>
<dbReference type="EMBL" id="AAAB01008960">
    <property type="protein sequence ID" value="EAA11365.4"/>
    <property type="molecule type" value="Genomic_DNA"/>
</dbReference>
<dbReference type="RefSeq" id="XP_315966.4">
    <property type="nucleotide sequence ID" value="XM_315966.4"/>
</dbReference>
<dbReference type="SMR" id="Q7Q6B5"/>
<dbReference type="FunCoup" id="Q7Q6B5">
    <property type="interactions" value="1536"/>
</dbReference>
<dbReference type="STRING" id="7165.Q7Q6B5"/>
<dbReference type="PaxDb" id="7165-AGAP005936-PA"/>
<dbReference type="VEuPathDB" id="VectorBase:AGAMI1_008734"/>
<dbReference type="VEuPathDB" id="VectorBase:AGAP005936"/>
<dbReference type="eggNOG" id="KOG4325">
    <property type="taxonomic scope" value="Eukaryota"/>
</dbReference>
<dbReference type="HOGENOM" id="CLU_074603_3_0_1"/>
<dbReference type="InParanoid" id="Q7Q6B5"/>
<dbReference type="OMA" id="IPGCADS"/>
<dbReference type="Proteomes" id="UP000007062">
    <property type="component" value="Chromosome 2L"/>
</dbReference>
<dbReference type="GO" id="GO:0005737">
    <property type="term" value="C:cytoplasm"/>
    <property type="evidence" value="ECO:0000318"/>
    <property type="project" value="GO_Central"/>
</dbReference>
<dbReference type="GO" id="GO:0035145">
    <property type="term" value="C:exon-exon junction complex"/>
    <property type="evidence" value="ECO:0000250"/>
    <property type="project" value="UniProtKB"/>
</dbReference>
<dbReference type="GO" id="GO:0003723">
    <property type="term" value="F:RNA binding"/>
    <property type="evidence" value="ECO:0000318"/>
    <property type="project" value="GO_Central"/>
</dbReference>
<dbReference type="GO" id="GO:1903259">
    <property type="term" value="P:exon-exon junction complex disassembly"/>
    <property type="evidence" value="ECO:0000318"/>
    <property type="project" value="GO_Central"/>
</dbReference>
<dbReference type="GO" id="GO:0000184">
    <property type="term" value="P:nuclear-transcribed mRNA catabolic process, nonsense-mediated decay"/>
    <property type="evidence" value="ECO:0000250"/>
    <property type="project" value="UniProtKB"/>
</dbReference>
<dbReference type="InterPro" id="IPR039333">
    <property type="entry name" value="PYM1"/>
</dbReference>
<dbReference type="InterPro" id="IPR015362">
    <property type="entry name" value="WIBG_mago-bd"/>
</dbReference>
<dbReference type="InterPro" id="IPR036348">
    <property type="entry name" value="WIBG_N_sf"/>
</dbReference>
<dbReference type="PANTHER" id="PTHR22959:SF0">
    <property type="entry name" value="PARTNER OF Y14 AND MAGO"/>
    <property type="match status" value="1"/>
</dbReference>
<dbReference type="PANTHER" id="PTHR22959">
    <property type="entry name" value="PYM PROTEIN"/>
    <property type="match status" value="1"/>
</dbReference>
<dbReference type="Pfam" id="PF09282">
    <property type="entry name" value="Mago-bind"/>
    <property type="match status" value="1"/>
</dbReference>
<dbReference type="SMART" id="SM01273">
    <property type="entry name" value="Mago-bind"/>
    <property type="match status" value="1"/>
</dbReference>
<dbReference type="SUPFAM" id="SSF101931">
    <property type="entry name" value="Pym (Within the bgcn gene intron protein, WIBG), N-terminal domain"/>
    <property type="match status" value="1"/>
</dbReference>
<evidence type="ECO:0000250" key="1"/>
<evidence type="ECO:0000250" key="2">
    <source>
        <dbReference type="UniProtKB" id="P82804"/>
    </source>
</evidence>
<evidence type="ECO:0000255" key="3"/>
<evidence type="ECO:0000256" key="4">
    <source>
        <dbReference type="SAM" id="MobiDB-lite"/>
    </source>
</evidence>
<evidence type="ECO:0000305" key="5"/>
<protein>
    <recommendedName>
        <fullName evidence="2">Partner of Y14 and mago</fullName>
    </recommendedName>
    <alternativeName>
        <fullName>Protein wibg homolog</fullName>
    </alternativeName>
</protein>
<reference key="1">
    <citation type="journal article" date="2002" name="Science">
        <title>The genome sequence of the malaria mosquito Anopheles gambiae.</title>
        <authorList>
            <person name="Holt R.A."/>
            <person name="Subramanian G.M."/>
            <person name="Halpern A."/>
            <person name="Sutton G.G."/>
            <person name="Charlab R."/>
            <person name="Nusskern D.R."/>
            <person name="Wincker P."/>
            <person name="Clark A.G."/>
            <person name="Ribeiro J.M.C."/>
            <person name="Wides R."/>
            <person name="Salzberg S.L."/>
            <person name="Loftus B.J."/>
            <person name="Yandell M.D."/>
            <person name="Majoros W.H."/>
            <person name="Rusch D.B."/>
            <person name="Lai Z."/>
            <person name="Kraft C.L."/>
            <person name="Abril J.F."/>
            <person name="Anthouard V."/>
            <person name="Arensburger P."/>
            <person name="Atkinson P.W."/>
            <person name="Baden H."/>
            <person name="de Berardinis V."/>
            <person name="Baldwin D."/>
            <person name="Benes V."/>
            <person name="Biedler J."/>
            <person name="Blass C."/>
            <person name="Bolanos R."/>
            <person name="Boscus D."/>
            <person name="Barnstead M."/>
            <person name="Cai S."/>
            <person name="Center A."/>
            <person name="Chaturverdi K."/>
            <person name="Christophides G.K."/>
            <person name="Chrystal M.A.M."/>
            <person name="Clamp M."/>
            <person name="Cravchik A."/>
            <person name="Curwen V."/>
            <person name="Dana A."/>
            <person name="Delcher A."/>
            <person name="Dew I."/>
            <person name="Evans C.A."/>
            <person name="Flanigan M."/>
            <person name="Grundschober-Freimoser A."/>
            <person name="Friedli L."/>
            <person name="Gu Z."/>
            <person name="Guan P."/>
            <person name="Guigo R."/>
            <person name="Hillenmeyer M.E."/>
            <person name="Hladun S.L."/>
            <person name="Hogan J.R."/>
            <person name="Hong Y.S."/>
            <person name="Hoover J."/>
            <person name="Jaillon O."/>
            <person name="Ke Z."/>
            <person name="Kodira C.D."/>
            <person name="Kokoza E."/>
            <person name="Koutsos A."/>
            <person name="Letunic I."/>
            <person name="Levitsky A.A."/>
            <person name="Liang Y."/>
            <person name="Lin J.-J."/>
            <person name="Lobo N.F."/>
            <person name="Lopez J.R."/>
            <person name="Malek J.A."/>
            <person name="McIntosh T.C."/>
            <person name="Meister S."/>
            <person name="Miller J.R."/>
            <person name="Mobarry C."/>
            <person name="Mongin E."/>
            <person name="Murphy S.D."/>
            <person name="O'Brochta D.A."/>
            <person name="Pfannkoch C."/>
            <person name="Qi R."/>
            <person name="Regier M.A."/>
            <person name="Remington K."/>
            <person name="Shao H."/>
            <person name="Sharakhova M.V."/>
            <person name="Sitter C.D."/>
            <person name="Shetty J."/>
            <person name="Smith T.J."/>
            <person name="Strong R."/>
            <person name="Sun J."/>
            <person name="Thomasova D."/>
            <person name="Ton L.Q."/>
            <person name="Topalis P."/>
            <person name="Tu Z.J."/>
            <person name="Unger M.F."/>
            <person name="Walenz B."/>
            <person name="Wang A.H."/>
            <person name="Wang J."/>
            <person name="Wang M."/>
            <person name="Wang X."/>
            <person name="Woodford K.J."/>
            <person name="Wortman J.R."/>
            <person name="Wu M."/>
            <person name="Yao A."/>
            <person name="Zdobnov E.M."/>
            <person name="Zhang H."/>
            <person name="Zhao Q."/>
            <person name="Zhao S."/>
            <person name="Zhu S.C."/>
            <person name="Zhimulev I."/>
            <person name="Coluzzi M."/>
            <person name="della Torre A."/>
            <person name="Roth C.W."/>
            <person name="Louis C."/>
            <person name="Kalush F."/>
            <person name="Mural R.J."/>
            <person name="Myers E.W."/>
            <person name="Adams M.D."/>
            <person name="Smith H.O."/>
            <person name="Broder S."/>
            <person name="Gardner M.J."/>
            <person name="Fraser C.M."/>
            <person name="Birney E."/>
            <person name="Bork P."/>
            <person name="Brey P.T."/>
            <person name="Venter J.C."/>
            <person name="Weissenbach J."/>
            <person name="Kafatos F.C."/>
            <person name="Collins F.H."/>
            <person name="Hoffman S.L."/>
        </authorList>
    </citation>
    <scope>NUCLEOTIDE SEQUENCE [LARGE SCALE GENOMIC DNA]</scope>
    <source>
        <strain>PEST</strain>
    </source>
</reference>
<gene>
    <name evidence="2" type="primary">Pym</name>
    <name type="synonym">wibg</name>
    <name type="ORF">AGAP005936</name>
</gene>